<reference key="1">
    <citation type="journal article" date="1998" name="Science">
        <title>Genome sequence of the nematode C. elegans: a platform for investigating biology.</title>
        <authorList>
            <consortium name="The C. elegans sequencing consortium"/>
        </authorList>
    </citation>
    <scope>NUCLEOTIDE SEQUENCE [LARGE SCALE GENOMIC DNA]</scope>
    <source>
        <strain>Bristol N2</strain>
    </source>
</reference>
<reference key="2">
    <citation type="journal article" date="2000" name="Genes Dev.">
        <title>CPEB proteins control two key steps in spermatogenesis in C. elegans.</title>
        <authorList>
            <person name="Luitjens C."/>
            <person name="Gallegos M."/>
            <person name="Kraemer B."/>
            <person name="Kimble J."/>
            <person name="Wickens M."/>
        </authorList>
    </citation>
    <scope>IDENTIFICATION</scope>
    <scope>FUNCTION</scope>
    <scope>TISSUE SPECIFICITY</scope>
</reference>
<name>CPB2_CAEEL</name>
<evidence type="ECO:0000250" key="1"/>
<evidence type="ECO:0000255" key="2">
    <source>
        <dbReference type="PROSITE-ProRule" id="PRU00176"/>
    </source>
</evidence>
<evidence type="ECO:0000269" key="3">
    <source>
    </source>
</evidence>
<feature type="chain" id="PRO_0000081513" description="Cytoplasmic polyadenylation element-binding protein 2">
    <location>
        <begin position="1"/>
        <end position="570"/>
    </location>
</feature>
<feature type="domain" description="RRM" evidence="2">
    <location>
        <begin position="434"/>
        <end position="516"/>
    </location>
</feature>
<keyword id="KW-1185">Reference proteome</keyword>
<keyword id="KW-0694">RNA-binding</keyword>
<comment type="function">
    <text evidence="1 3">Cytoplasmic polyadenylation element binding protein that binds to and regulates the translation of specific mRNAs (By similarity). Not required for oogenesis.</text>
</comment>
<comment type="tissue specificity">
    <text evidence="3">Expressed specifically in the spermatogenic germ line.</text>
</comment>
<sequence length="570" mass="66002">MSKSRRVFLSMQGDDDFWGNGDRFEEHKLSKMNRRKCRGMMDTAKDDVLDEHFFKQNNLVTQELEQQNAKSNDMFRERQDWNSSTPLEKINLVESEDPVTCPENTEAKIHCSEVKVTEKMPLELDDEFYNNFREYFSSRPEVIFLTRSMHKDAAENYDKQFIDLYEKTRKRLELRSSPQINQILRCTSNTNATSSEIQLRNRQAVIVSNFREPDRRLGRYSKYYYHHNVGPEVYSRKVFVGGLPSCVKESDILNFFSRYGRLQVDWPSKHYECKSDSDPSLCNEPISSSSYQPSSHLAMVSPPFGEINPFMRNMPAQSESSQTGGFGRISSGSIGGFLNPGMAQVARGNLGFGSTKSDGSINGDKRQHHLGYVFLLFEKERSVRDLVLDCFEEEEGLFITLESSTDSIRVQIRPWLLADAEFLMDFNVPINTKLVAFIGGVPRPLKAVELAHFFEQTYGHVVCVGIDIDNKFKYPRGSGRVAFSDYDAYVQAITDRYIVLDHEDIHKRVEIKPYFFHNQSCEECSGRYHRQHAPYFCPSLECFQYYCEPCWHKMHSHPSRFHHMPVVKGV</sequence>
<protein>
    <recommendedName>
        <fullName>Cytoplasmic polyadenylation element-binding protein 2</fullName>
    </recommendedName>
</protein>
<gene>
    <name type="primary">cpb-2</name>
    <name type="ORF">C30B5.3</name>
</gene>
<proteinExistence type="evidence at transcript level"/>
<organism>
    <name type="scientific">Caenorhabditis elegans</name>
    <dbReference type="NCBI Taxonomy" id="6239"/>
    <lineage>
        <taxon>Eukaryota</taxon>
        <taxon>Metazoa</taxon>
        <taxon>Ecdysozoa</taxon>
        <taxon>Nematoda</taxon>
        <taxon>Chromadorea</taxon>
        <taxon>Rhabditida</taxon>
        <taxon>Rhabditina</taxon>
        <taxon>Rhabditomorpha</taxon>
        <taxon>Rhabditoidea</taxon>
        <taxon>Rhabditidae</taxon>
        <taxon>Peloderinae</taxon>
        <taxon>Caenorhabditis</taxon>
    </lineage>
</organism>
<accession>Q18317</accession>
<dbReference type="EMBL" id="FO080719">
    <property type="protein sequence ID" value="CCD66139.1"/>
    <property type="molecule type" value="Genomic_DNA"/>
</dbReference>
<dbReference type="PIR" id="T15705">
    <property type="entry name" value="T15705"/>
</dbReference>
<dbReference type="RefSeq" id="NP_495236.3">
    <property type="nucleotide sequence ID" value="NM_062835.6"/>
</dbReference>
<dbReference type="SMR" id="Q18317"/>
<dbReference type="BioGRID" id="39368">
    <property type="interactions" value="2"/>
</dbReference>
<dbReference type="FunCoup" id="Q18317">
    <property type="interactions" value="5"/>
</dbReference>
<dbReference type="IntAct" id="Q18317">
    <property type="interactions" value="1"/>
</dbReference>
<dbReference type="STRING" id="6239.C30B5.3.1"/>
<dbReference type="PaxDb" id="6239-C30B5.3"/>
<dbReference type="EnsemblMetazoa" id="C30B5.3.1">
    <property type="protein sequence ID" value="C30B5.3.1"/>
    <property type="gene ID" value="WBGene00000771"/>
</dbReference>
<dbReference type="EnsemblMetazoa" id="C30B5.3.2">
    <property type="protein sequence ID" value="C30B5.3.2"/>
    <property type="gene ID" value="WBGene00000771"/>
</dbReference>
<dbReference type="GeneID" id="174027"/>
<dbReference type="KEGG" id="cel:CELE_C30B5.3"/>
<dbReference type="UCSC" id="C30B5.3">
    <property type="organism name" value="c. elegans"/>
</dbReference>
<dbReference type="AGR" id="WB:WBGene00000771"/>
<dbReference type="CTD" id="174027"/>
<dbReference type="WormBase" id="C30B5.3">
    <property type="protein sequence ID" value="CE44953"/>
    <property type="gene ID" value="WBGene00000771"/>
    <property type="gene designation" value="cpb-2"/>
</dbReference>
<dbReference type="eggNOG" id="KOG0129">
    <property type="taxonomic scope" value="Eukaryota"/>
</dbReference>
<dbReference type="GeneTree" id="ENSGT00940000169843"/>
<dbReference type="HOGENOM" id="CLU_034584_0_0_1"/>
<dbReference type="InParanoid" id="Q18317"/>
<dbReference type="OMA" id="DWPSKHY"/>
<dbReference type="OrthoDB" id="10033548at2759"/>
<dbReference type="PhylomeDB" id="Q18317"/>
<dbReference type="PRO" id="PR:Q18317"/>
<dbReference type="Proteomes" id="UP000001940">
    <property type="component" value="Chromosome II"/>
</dbReference>
<dbReference type="Bgee" id="WBGene00000771">
    <property type="expression patterns" value="Expressed in embryo and 2 other cell types or tissues"/>
</dbReference>
<dbReference type="GO" id="GO:0005737">
    <property type="term" value="C:cytoplasm"/>
    <property type="evidence" value="ECO:0000318"/>
    <property type="project" value="GO_Central"/>
</dbReference>
<dbReference type="GO" id="GO:0005634">
    <property type="term" value="C:nucleus"/>
    <property type="evidence" value="ECO:0000318"/>
    <property type="project" value="GO_Central"/>
</dbReference>
<dbReference type="GO" id="GO:0003730">
    <property type="term" value="F:mRNA 3'-UTR binding"/>
    <property type="evidence" value="ECO:0000318"/>
    <property type="project" value="GO_Central"/>
</dbReference>
<dbReference type="GO" id="GO:0000900">
    <property type="term" value="F:mRNA regulatory element binding translation repressor activity"/>
    <property type="evidence" value="ECO:0000318"/>
    <property type="project" value="GO_Central"/>
</dbReference>
<dbReference type="GO" id="GO:0043022">
    <property type="term" value="F:ribosome binding"/>
    <property type="evidence" value="ECO:0000318"/>
    <property type="project" value="GO_Central"/>
</dbReference>
<dbReference type="GO" id="GO:0008135">
    <property type="term" value="F:translation factor activity, RNA binding"/>
    <property type="evidence" value="ECO:0000318"/>
    <property type="project" value="GO_Central"/>
</dbReference>
<dbReference type="GO" id="GO:2000766">
    <property type="term" value="P:negative regulation of cytoplasmic translation"/>
    <property type="evidence" value="ECO:0000318"/>
    <property type="project" value="GO_Central"/>
</dbReference>
<dbReference type="CDD" id="cd19757">
    <property type="entry name" value="Bbox1"/>
    <property type="match status" value="1"/>
</dbReference>
<dbReference type="CDD" id="cd12726">
    <property type="entry name" value="RRM2_CPEB2_like"/>
    <property type="match status" value="1"/>
</dbReference>
<dbReference type="FunFam" id="3.30.70.330:FF:000483">
    <property type="entry name" value="Cytoplasmic polyadenylation element-binding protein 2"/>
    <property type="match status" value="1"/>
</dbReference>
<dbReference type="Gene3D" id="3.30.70.330">
    <property type="match status" value="2"/>
</dbReference>
<dbReference type="Gene3D" id="4.10.640.40">
    <property type="entry name" value="Cytoplasmic polyadenylation element-binding protein, ZZ domain"/>
    <property type="match status" value="1"/>
</dbReference>
<dbReference type="InterPro" id="IPR032296">
    <property type="entry name" value="CEBP_ZZ"/>
</dbReference>
<dbReference type="InterPro" id="IPR038446">
    <property type="entry name" value="CEBP_ZZ_sf"/>
</dbReference>
<dbReference type="InterPro" id="IPR034819">
    <property type="entry name" value="CPEB"/>
</dbReference>
<dbReference type="InterPro" id="IPR012677">
    <property type="entry name" value="Nucleotide-bd_a/b_plait_sf"/>
</dbReference>
<dbReference type="InterPro" id="IPR035979">
    <property type="entry name" value="RBD_domain_sf"/>
</dbReference>
<dbReference type="InterPro" id="IPR000504">
    <property type="entry name" value="RRM_dom"/>
</dbReference>
<dbReference type="PANTHER" id="PTHR12566">
    <property type="entry name" value="CYTOPLASMIC POLYADENYLATION ELEMENT BINDING PROTEIN CPEB"/>
    <property type="match status" value="1"/>
</dbReference>
<dbReference type="PANTHER" id="PTHR12566:SF12">
    <property type="entry name" value="TRANSLATIONAL REGULATOR ORB2"/>
    <property type="match status" value="1"/>
</dbReference>
<dbReference type="Pfam" id="PF16366">
    <property type="entry name" value="CEBP_ZZ"/>
    <property type="match status" value="1"/>
</dbReference>
<dbReference type="Pfam" id="PF16367">
    <property type="entry name" value="RRM_7"/>
    <property type="match status" value="2"/>
</dbReference>
<dbReference type="SMART" id="SM00360">
    <property type="entry name" value="RRM"/>
    <property type="match status" value="2"/>
</dbReference>
<dbReference type="SUPFAM" id="SSF54928">
    <property type="entry name" value="RNA-binding domain, RBD"/>
    <property type="match status" value="2"/>
</dbReference>
<dbReference type="PROSITE" id="PS50102">
    <property type="entry name" value="RRM"/>
    <property type="match status" value="1"/>
</dbReference>